<sequence>MSEKLYNYDVDPVETNDWVQSIESVIREEGLERAKFLIEKILKKSKITRANFFKCFFTSDYINTISSEEEVEYPGDLILEKRIRSAIRWNAIMMVLRASKKDLELGGHLSSFQSSATIYEVCFNHFFRSKNDEDGGDLVYFQGHIAPGIYARSFLEGRLSKKQIDNFRQEVDGKGLSSYPHPKLMPNFWQFPTVSMGLGPLCAIYQAKFLKYLQNRELKNTSKQTVYAFLGDGEMDEPESKGAISIAVREKLDNLIFVINCNLQRLDGPVVGNGKIVNELESFFYGAGWKVIKVIWGGKWDSLLKKDKTGKLIQLMNETIDGEYQTLKSKDGAYVRKYFFGKYQETLELVKNMTDEEIWNLNRGGHDPKKMFNALKKAKEIKDKPTVILAHTVKGYGMGVIAEGKNIAHQIKKININGIIYIRDRFNIPISNEDIKELPYVVFEKNSKEYCYMHQQRKKLGGYIPFRLSKFTNALNIPDLIDFKSLLKEQNKKMSTTIAFVRVLNLILKNHSIKNLIVPIIADEARTFGMEGLFRMIGIYSSIGQKYVPQDREQLAYYKEEKKGQILQEGINELGAASSWLAAATSYSTNDFPMIPFYIYYSIFGFQRIGDLFWAAGDQQARGFLIGGTSGRTTLNGEGLQHEDGHSHIQSLTIPNCVSYDPAFAYEVAVIIQDGLRRMYGPLQENIYYYITTINENYYMPAMPQGVEKGICKGIYKLKTFYATELKVQLMGSGAILRCICKAGEILSNDYCITTDIYSVTSFTELARNGEDCERWNMLHPYEKKRIAYIKTVMNSSPAVAATDYMKLFAEQIRHYIPSNEYHVLGTDGFGRSDSRDKLRDHFEVSAYYIVVAALNLLAKLNNINKKVVEEAIIKFNINADKINPRLA</sequence>
<protein>
    <recommendedName>
        <fullName>Pyruvate dehydrogenase E1 component</fullName>
        <shortName>PDH E1 component</shortName>
        <ecNumber>1.2.4.1</ecNumber>
    </recommendedName>
</protein>
<dbReference type="EC" id="1.2.4.1"/>
<dbReference type="EMBL" id="AE013218">
    <property type="protein sequence ID" value="AAM67763.1"/>
    <property type="molecule type" value="Genomic_DNA"/>
</dbReference>
<dbReference type="RefSeq" id="WP_011053730.1">
    <property type="nucleotide sequence ID" value="NC_004061.1"/>
</dbReference>
<dbReference type="SMR" id="Q8K9T9"/>
<dbReference type="STRING" id="198804.BUsg_199"/>
<dbReference type="GeneID" id="93003666"/>
<dbReference type="KEGG" id="bas:BUsg_199"/>
<dbReference type="eggNOG" id="COG2609">
    <property type="taxonomic scope" value="Bacteria"/>
</dbReference>
<dbReference type="HOGENOM" id="CLU_009154_2_0_6"/>
<dbReference type="Proteomes" id="UP000000416">
    <property type="component" value="Chromosome"/>
</dbReference>
<dbReference type="GO" id="GO:0004739">
    <property type="term" value="F:pyruvate dehydrogenase (acetyl-transferring) activity"/>
    <property type="evidence" value="ECO:0007669"/>
    <property type="project" value="UniProtKB-EC"/>
</dbReference>
<dbReference type="CDD" id="cd02017">
    <property type="entry name" value="TPP_E1_EcPDC_like"/>
    <property type="match status" value="1"/>
</dbReference>
<dbReference type="FunFam" id="3.40.50.970:FF:000009">
    <property type="entry name" value="Pyruvate dehydrogenase E1 component"/>
    <property type="match status" value="1"/>
</dbReference>
<dbReference type="FunFam" id="3.40.50.970:FF:000011">
    <property type="entry name" value="Pyruvate dehydrogenase E1 component"/>
    <property type="match status" value="1"/>
</dbReference>
<dbReference type="Gene3D" id="3.40.50.920">
    <property type="match status" value="1"/>
</dbReference>
<dbReference type="Gene3D" id="3.40.50.970">
    <property type="match status" value="2"/>
</dbReference>
<dbReference type="InterPro" id="IPR035807">
    <property type="entry name" value="PDC_E1_N"/>
</dbReference>
<dbReference type="InterPro" id="IPR051157">
    <property type="entry name" value="PDH/Transketolase"/>
</dbReference>
<dbReference type="InterPro" id="IPR004660">
    <property type="entry name" value="PDH_E1"/>
</dbReference>
<dbReference type="InterPro" id="IPR041621">
    <property type="entry name" value="PDH_E1_M"/>
</dbReference>
<dbReference type="InterPro" id="IPR029061">
    <property type="entry name" value="THDP-binding"/>
</dbReference>
<dbReference type="InterPro" id="IPR009014">
    <property type="entry name" value="Transketo_C/PFOR_II"/>
</dbReference>
<dbReference type="InterPro" id="IPR055152">
    <property type="entry name" value="Transketolase-like_C_2"/>
</dbReference>
<dbReference type="InterPro" id="IPR005474">
    <property type="entry name" value="Transketolase_N"/>
</dbReference>
<dbReference type="NCBIfam" id="TIGR00759">
    <property type="entry name" value="aceE"/>
    <property type="match status" value="1"/>
</dbReference>
<dbReference type="PANTHER" id="PTHR43825">
    <property type="entry name" value="PYRUVATE DEHYDROGENASE E1 COMPONENT"/>
    <property type="match status" value="1"/>
</dbReference>
<dbReference type="PANTHER" id="PTHR43825:SF3">
    <property type="entry name" value="PYRUVATE DEHYDROGENASE E1 COMPONENT"/>
    <property type="match status" value="1"/>
</dbReference>
<dbReference type="Pfam" id="PF17831">
    <property type="entry name" value="PDH_E1_M"/>
    <property type="match status" value="1"/>
</dbReference>
<dbReference type="Pfam" id="PF22613">
    <property type="entry name" value="Transketolase_C_1"/>
    <property type="match status" value="1"/>
</dbReference>
<dbReference type="Pfam" id="PF00456">
    <property type="entry name" value="Transketolase_N"/>
    <property type="match status" value="1"/>
</dbReference>
<dbReference type="PIRSF" id="PIRSF000156">
    <property type="entry name" value="Pyruvate_dh_E1"/>
    <property type="match status" value="1"/>
</dbReference>
<dbReference type="SUPFAM" id="SSF52518">
    <property type="entry name" value="Thiamin diphosphate-binding fold (THDP-binding)"/>
    <property type="match status" value="2"/>
</dbReference>
<dbReference type="SUPFAM" id="SSF52922">
    <property type="entry name" value="TK C-terminal domain-like"/>
    <property type="match status" value="1"/>
</dbReference>
<feature type="chain" id="PRO_0000162241" description="Pyruvate dehydrogenase E1 component">
    <location>
        <begin position="1"/>
        <end position="888"/>
    </location>
</feature>
<keyword id="KW-0560">Oxidoreductase</keyword>
<keyword id="KW-0670">Pyruvate</keyword>
<keyword id="KW-0786">Thiamine pyrophosphate</keyword>
<gene>
    <name type="primary">aceE</name>
    <name type="ordered locus">BUsg_199</name>
</gene>
<name>ODP1_BUCAP</name>
<reference key="1">
    <citation type="journal article" date="2002" name="Science">
        <title>50 million years of genomic stasis in endosymbiotic bacteria.</title>
        <authorList>
            <person name="Tamas I."/>
            <person name="Klasson L."/>
            <person name="Canbaeck B."/>
            <person name="Naeslund A.K."/>
            <person name="Eriksson A.-S."/>
            <person name="Wernegreen J.J."/>
            <person name="Sandstroem J.P."/>
            <person name="Moran N.A."/>
            <person name="Andersson S.G.E."/>
        </authorList>
    </citation>
    <scope>NUCLEOTIDE SEQUENCE [LARGE SCALE GENOMIC DNA]</scope>
    <source>
        <strain>Sg</strain>
    </source>
</reference>
<organism>
    <name type="scientific">Buchnera aphidicola subsp. Schizaphis graminum (strain Sg)</name>
    <dbReference type="NCBI Taxonomy" id="198804"/>
    <lineage>
        <taxon>Bacteria</taxon>
        <taxon>Pseudomonadati</taxon>
        <taxon>Pseudomonadota</taxon>
        <taxon>Gammaproteobacteria</taxon>
        <taxon>Enterobacterales</taxon>
        <taxon>Erwiniaceae</taxon>
        <taxon>Buchnera</taxon>
    </lineage>
</organism>
<accession>Q8K9T9</accession>
<proteinExistence type="inferred from homology"/>
<comment type="function">
    <text evidence="1">Component of the pyruvate dehydrogenase (PDH) complex, that catalyzes the overall conversion of pyruvate to acetyl-CoA and CO(2).</text>
</comment>
<comment type="catalytic activity">
    <reaction>
        <text>N(6)-[(R)-lipoyl]-L-lysyl-[protein] + pyruvate + H(+) = N(6)-[(R)-S(8)-acetyldihydrolipoyl]-L-lysyl-[protein] + CO2</text>
        <dbReference type="Rhea" id="RHEA:19189"/>
        <dbReference type="Rhea" id="RHEA-COMP:10474"/>
        <dbReference type="Rhea" id="RHEA-COMP:10478"/>
        <dbReference type="ChEBI" id="CHEBI:15361"/>
        <dbReference type="ChEBI" id="CHEBI:15378"/>
        <dbReference type="ChEBI" id="CHEBI:16526"/>
        <dbReference type="ChEBI" id="CHEBI:83099"/>
        <dbReference type="ChEBI" id="CHEBI:83111"/>
        <dbReference type="EC" id="1.2.4.1"/>
    </reaction>
</comment>
<comment type="cofactor">
    <cofactor evidence="1">
        <name>thiamine diphosphate</name>
        <dbReference type="ChEBI" id="CHEBI:58937"/>
    </cofactor>
</comment>
<comment type="subunit">
    <text evidence="1">Homodimer. Part of the PDH complex, consisting of multiple copies of pyruvate dehydrogenase (E1), dihydrolipoamide acetyltransferase (E2) and lipoamide dehydrogenase (E3).</text>
</comment>
<evidence type="ECO:0000250" key="1"/>